<organism>
    <name type="scientific">Alkalilimnicola ehrlichii (strain ATCC BAA-1101 / DSM 17681 / MLHE-1)</name>
    <dbReference type="NCBI Taxonomy" id="187272"/>
    <lineage>
        <taxon>Bacteria</taxon>
        <taxon>Pseudomonadati</taxon>
        <taxon>Pseudomonadota</taxon>
        <taxon>Gammaproteobacteria</taxon>
        <taxon>Chromatiales</taxon>
        <taxon>Ectothiorhodospiraceae</taxon>
        <taxon>Alkalilimnicola</taxon>
    </lineage>
</organism>
<comment type="function">
    <text evidence="1">Hydrolyzes ribosome-free peptidyl-tRNAs (with 1 or more amino acids incorporated), which drop off the ribosome during protein synthesis, or as a result of ribosome stalling.</text>
</comment>
<comment type="function">
    <text evidence="1">Catalyzes the release of premature peptidyl moieties from peptidyl-tRNA molecules trapped in stalled 50S ribosomal subunits, and thus maintains levels of free tRNAs and 50S ribosomes.</text>
</comment>
<comment type="catalytic activity">
    <reaction evidence="1">
        <text>an N-acyl-L-alpha-aminoacyl-tRNA + H2O = an N-acyl-L-amino acid + a tRNA + H(+)</text>
        <dbReference type="Rhea" id="RHEA:54448"/>
        <dbReference type="Rhea" id="RHEA-COMP:10123"/>
        <dbReference type="Rhea" id="RHEA-COMP:13883"/>
        <dbReference type="ChEBI" id="CHEBI:15377"/>
        <dbReference type="ChEBI" id="CHEBI:15378"/>
        <dbReference type="ChEBI" id="CHEBI:59874"/>
        <dbReference type="ChEBI" id="CHEBI:78442"/>
        <dbReference type="ChEBI" id="CHEBI:138191"/>
        <dbReference type="EC" id="3.1.1.29"/>
    </reaction>
</comment>
<comment type="subunit">
    <text evidence="1">Monomer.</text>
</comment>
<comment type="subcellular location">
    <subcellularLocation>
        <location evidence="1">Cytoplasm</location>
    </subcellularLocation>
</comment>
<comment type="similarity">
    <text evidence="1">Belongs to the PTH family.</text>
</comment>
<accession>Q0ABZ7</accession>
<keyword id="KW-0963">Cytoplasm</keyword>
<keyword id="KW-0378">Hydrolase</keyword>
<keyword id="KW-1185">Reference proteome</keyword>
<keyword id="KW-0694">RNA-binding</keyword>
<keyword id="KW-0820">tRNA-binding</keyword>
<reference key="1">
    <citation type="submission" date="2006-08" db="EMBL/GenBank/DDBJ databases">
        <title>Complete sequence of Alkalilimnicola ehrilichei MLHE-1.</title>
        <authorList>
            <person name="Copeland A."/>
            <person name="Lucas S."/>
            <person name="Lapidus A."/>
            <person name="Barry K."/>
            <person name="Detter J.C."/>
            <person name="Glavina del Rio T."/>
            <person name="Hammon N."/>
            <person name="Israni S."/>
            <person name="Dalin E."/>
            <person name="Tice H."/>
            <person name="Pitluck S."/>
            <person name="Sims D."/>
            <person name="Brettin T."/>
            <person name="Bruce D."/>
            <person name="Han C."/>
            <person name="Tapia R."/>
            <person name="Gilna P."/>
            <person name="Schmutz J."/>
            <person name="Larimer F."/>
            <person name="Land M."/>
            <person name="Hauser L."/>
            <person name="Kyrpides N."/>
            <person name="Mikhailova N."/>
            <person name="Oremland R.S."/>
            <person name="Hoeft S.E."/>
            <person name="Switzer-Blum J."/>
            <person name="Kulp T."/>
            <person name="King G."/>
            <person name="Tabita R."/>
            <person name="Witte B."/>
            <person name="Santini J.M."/>
            <person name="Basu P."/>
            <person name="Hollibaugh J.T."/>
            <person name="Xie G."/>
            <person name="Stolz J.F."/>
            <person name="Richardson P."/>
        </authorList>
    </citation>
    <scope>NUCLEOTIDE SEQUENCE [LARGE SCALE GENOMIC DNA]</scope>
    <source>
        <strain>ATCC BAA-1101 / DSM 17681 / MLHE-1</strain>
    </source>
</reference>
<feature type="chain" id="PRO_0000264001" description="Peptidyl-tRNA hydrolase">
    <location>
        <begin position="1"/>
        <end position="197"/>
    </location>
</feature>
<feature type="active site" description="Proton acceptor" evidence="1">
    <location>
        <position position="26"/>
    </location>
</feature>
<feature type="binding site" evidence="1">
    <location>
        <position position="21"/>
    </location>
    <ligand>
        <name>tRNA</name>
        <dbReference type="ChEBI" id="CHEBI:17843"/>
    </ligand>
</feature>
<feature type="binding site" evidence="1">
    <location>
        <position position="72"/>
    </location>
    <ligand>
        <name>tRNA</name>
        <dbReference type="ChEBI" id="CHEBI:17843"/>
    </ligand>
</feature>
<feature type="binding site" evidence="1">
    <location>
        <position position="74"/>
    </location>
    <ligand>
        <name>tRNA</name>
        <dbReference type="ChEBI" id="CHEBI:17843"/>
    </ligand>
</feature>
<feature type="binding site" evidence="1">
    <location>
        <position position="120"/>
    </location>
    <ligand>
        <name>tRNA</name>
        <dbReference type="ChEBI" id="CHEBI:17843"/>
    </ligand>
</feature>
<feature type="site" description="Discriminates between blocked and unblocked aminoacyl-tRNA" evidence="1">
    <location>
        <position position="16"/>
    </location>
</feature>
<feature type="site" description="Stabilizes the basic form of H active site to accept a proton" evidence="1">
    <location>
        <position position="99"/>
    </location>
</feature>
<name>PTH_ALKEH</name>
<gene>
    <name evidence="1" type="primary">pth</name>
    <name type="ordered locus">Mlg_0285</name>
</gene>
<proteinExistence type="inferred from homology"/>
<sequence length="197" mass="21844">MTDSPQPIQLIVGLGNPGDRYAGTRHNAGFWLLDELLRRHGGALRPERRYHADLATLHLGPHQCRLMRPQTYMNRSGQAVGPYAQFFRLPPESILVVHDEIDLPPGQVKLKQGGGHGGHNGLRDIIRALGNERGFCRARIGVGHPGHRDGVVPYVLSRPAPDERRAIADAVEELADCVEWLLAGDWGRACQRLHSRS</sequence>
<evidence type="ECO:0000255" key="1">
    <source>
        <dbReference type="HAMAP-Rule" id="MF_00083"/>
    </source>
</evidence>
<protein>
    <recommendedName>
        <fullName evidence="1">Peptidyl-tRNA hydrolase</fullName>
        <shortName evidence="1">Pth</shortName>
        <ecNumber evidence="1">3.1.1.29</ecNumber>
    </recommendedName>
</protein>
<dbReference type="EC" id="3.1.1.29" evidence="1"/>
<dbReference type="EMBL" id="CP000453">
    <property type="protein sequence ID" value="ABI55640.1"/>
    <property type="molecule type" value="Genomic_DNA"/>
</dbReference>
<dbReference type="RefSeq" id="WP_011628036.1">
    <property type="nucleotide sequence ID" value="NC_008340.1"/>
</dbReference>
<dbReference type="SMR" id="Q0ABZ7"/>
<dbReference type="KEGG" id="aeh:Mlg_0285"/>
<dbReference type="eggNOG" id="COG0193">
    <property type="taxonomic scope" value="Bacteria"/>
</dbReference>
<dbReference type="HOGENOM" id="CLU_062456_3_1_6"/>
<dbReference type="OrthoDB" id="9800507at2"/>
<dbReference type="Proteomes" id="UP000001962">
    <property type="component" value="Chromosome"/>
</dbReference>
<dbReference type="GO" id="GO:0005737">
    <property type="term" value="C:cytoplasm"/>
    <property type="evidence" value="ECO:0007669"/>
    <property type="project" value="UniProtKB-SubCell"/>
</dbReference>
<dbReference type="GO" id="GO:0004045">
    <property type="term" value="F:peptidyl-tRNA hydrolase activity"/>
    <property type="evidence" value="ECO:0007669"/>
    <property type="project" value="UniProtKB-UniRule"/>
</dbReference>
<dbReference type="GO" id="GO:0000049">
    <property type="term" value="F:tRNA binding"/>
    <property type="evidence" value="ECO:0007669"/>
    <property type="project" value="UniProtKB-UniRule"/>
</dbReference>
<dbReference type="GO" id="GO:0006515">
    <property type="term" value="P:protein quality control for misfolded or incompletely synthesized proteins"/>
    <property type="evidence" value="ECO:0007669"/>
    <property type="project" value="UniProtKB-UniRule"/>
</dbReference>
<dbReference type="GO" id="GO:0072344">
    <property type="term" value="P:rescue of stalled ribosome"/>
    <property type="evidence" value="ECO:0007669"/>
    <property type="project" value="UniProtKB-UniRule"/>
</dbReference>
<dbReference type="CDD" id="cd00462">
    <property type="entry name" value="PTH"/>
    <property type="match status" value="1"/>
</dbReference>
<dbReference type="FunFam" id="3.40.50.1470:FF:000001">
    <property type="entry name" value="Peptidyl-tRNA hydrolase"/>
    <property type="match status" value="1"/>
</dbReference>
<dbReference type="Gene3D" id="3.40.50.1470">
    <property type="entry name" value="Peptidyl-tRNA hydrolase"/>
    <property type="match status" value="1"/>
</dbReference>
<dbReference type="HAMAP" id="MF_00083">
    <property type="entry name" value="Pept_tRNA_hydro_bact"/>
    <property type="match status" value="1"/>
</dbReference>
<dbReference type="InterPro" id="IPR001328">
    <property type="entry name" value="Pept_tRNA_hydro"/>
</dbReference>
<dbReference type="InterPro" id="IPR018171">
    <property type="entry name" value="Pept_tRNA_hydro_CS"/>
</dbReference>
<dbReference type="InterPro" id="IPR036416">
    <property type="entry name" value="Pept_tRNA_hydro_sf"/>
</dbReference>
<dbReference type="NCBIfam" id="TIGR00447">
    <property type="entry name" value="pth"/>
    <property type="match status" value="1"/>
</dbReference>
<dbReference type="PANTHER" id="PTHR17224">
    <property type="entry name" value="PEPTIDYL-TRNA HYDROLASE"/>
    <property type="match status" value="1"/>
</dbReference>
<dbReference type="PANTHER" id="PTHR17224:SF1">
    <property type="entry name" value="PEPTIDYL-TRNA HYDROLASE"/>
    <property type="match status" value="1"/>
</dbReference>
<dbReference type="Pfam" id="PF01195">
    <property type="entry name" value="Pept_tRNA_hydro"/>
    <property type="match status" value="1"/>
</dbReference>
<dbReference type="SUPFAM" id="SSF53178">
    <property type="entry name" value="Peptidyl-tRNA hydrolase-like"/>
    <property type="match status" value="1"/>
</dbReference>
<dbReference type="PROSITE" id="PS01195">
    <property type="entry name" value="PEPT_TRNA_HYDROL_1"/>
    <property type="match status" value="1"/>
</dbReference>
<dbReference type="PROSITE" id="PS01196">
    <property type="entry name" value="PEPT_TRNA_HYDROL_2"/>
    <property type="match status" value="1"/>
</dbReference>